<reference key="1">
    <citation type="journal article" date="2003" name="PLoS Biol.">
        <title>The genome sequence of Caenorhabditis briggsae: a platform for comparative genomics.</title>
        <authorList>
            <person name="Stein L.D."/>
            <person name="Bao Z."/>
            <person name="Blasiar D."/>
            <person name="Blumenthal T."/>
            <person name="Brent M.R."/>
            <person name="Chen N."/>
            <person name="Chinwalla A."/>
            <person name="Clarke L."/>
            <person name="Clee C."/>
            <person name="Coghlan A."/>
            <person name="Coulson A."/>
            <person name="D'Eustachio P."/>
            <person name="Fitch D.H.A."/>
            <person name="Fulton L.A."/>
            <person name="Fulton R.E."/>
            <person name="Griffiths-Jones S."/>
            <person name="Harris T.W."/>
            <person name="Hillier L.W."/>
            <person name="Kamath R."/>
            <person name="Kuwabara P.E."/>
            <person name="Mardis E.R."/>
            <person name="Marra M.A."/>
            <person name="Miner T.L."/>
            <person name="Minx P."/>
            <person name="Mullikin J.C."/>
            <person name="Plumb R.W."/>
            <person name="Rogers J."/>
            <person name="Schein J.E."/>
            <person name="Sohrmann M."/>
            <person name="Spieth J."/>
            <person name="Stajich J.E."/>
            <person name="Wei C."/>
            <person name="Willey D."/>
            <person name="Wilson R.K."/>
            <person name="Durbin R.M."/>
            <person name="Waterston R.H."/>
        </authorList>
    </citation>
    <scope>NUCLEOTIDE SEQUENCE [LARGE SCALE GENOMIC DNA]</scope>
    <source>
        <strain>AF16</strain>
    </source>
</reference>
<keyword id="KW-0175">Coiled coil</keyword>
<keyword id="KW-0963">Cytoplasm</keyword>
<keyword id="KW-0206">Cytoskeleton</keyword>
<keyword id="KW-0493">Microtubule</keyword>
<keyword id="KW-1185">Reference proteome</keyword>
<keyword id="KW-0677">Repeat</keyword>
<comment type="function">
    <text evidence="1">Microtubule plus-end tracking protein that promotes the stabilization of dynamic microtubules.</text>
</comment>
<comment type="subcellular location">
    <subcellularLocation>
        <location evidence="1">Cytoplasm</location>
        <location evidence="1">Cytoskeleton</location>
    </subcellularLocation>
</comment>
<comment type="similarity">
    <text evidence="4">Belongs to the CLASP family.</text>
</comment>
<evidence type="ECO:0000250" key="1"/>
<evidence type="ECO:0000255" key="2"/>
<evidence type="ECO:0000256" key="3">
    <source>
        <dbReference type="SAM" id="MobiDB-lite"/>
    </source>
</evidence>
<evidence type="ECO:0000305" key="4"/>
<evidence type="ECO:0000312" key="5">
    <source>
        <dbReference type="WormBase" id="CBG09173a"/>
    </source>
</evidence>
<dbReference type="EMBL" id="HE601302">
    <property type="protein sequence ID" value="CAP28846.3"/>
    <property type="molecule type" value="Genomic_DNA"/>
</dbReference>
<dbReference type="RefSeq" id="XP_045093945.1">
    <property type="nucleotide sequence ID" value="XM_045244491.1"/>
</dbReference>
<dbReference type="FunCoup" id="Q61KX5">
    <property type="interactions" value="2072"/>
</dbReference>
<dbReference type="STRING" id="6238.Q61KX5"/>
<dbReference type="EnsemblMetazoa" id="CBG09173a.1">
    <property type="protein sequence ID" value="CBG09173a.1"/>
    <property type="gene ID" value="WBGene00030813"/>
</dbReference>
<dbReference type="GeneID" id="8584606"/>
<dbReference type="WormBase" id="CBG09173a">
    <property type="protein sequence ID" value="CBP37580"/>
    <property type="gene ID" value="WBGene00030813"/>
    <property type="gene designation" value="Cbr-cls-1"/>
</dbReference>
<dbReference type="eggNOG" id="KOG2956">
    <property type="taxonomic scope" value="Eukaryota"/>
</dbReference>
<dbReference type="HOGENOM" id="CLU_005060_1_0_1"/>
<dbReference type="InParanoid" id="Q61KX5"/>
<dbReference type="OMA" id="WMFDPRI"/>
<dbReference type="Proteomes" id="UP000008549">
    <property type="component" value="Unassembled WGS sequence"/>
</dbReference>
<dbReference type="GO" id="GO:0045180">
    <property type="term" value="C:basal cortex"/>
    <property type="evidence" value="ECO:0000318"/>
    <property type="project" value="GO_Central"/>
</dbReference>
<dbReference type="GO" id="GO:0005881">
    <property type="term" value="C:cytoplasmic microtubule"/>
    <property type="evidence" value="ECO:0000318"/>
    <property type="project" value="GO_Central"/>
</dbReference>
<dbReference type="GO" id="GO:0000776">
    <property type="term" value="C:kinetochore"/>
    <property type="evidence" value="ECO:0000318"/>
    <property type="project" value="GO_Central"/>
</dbReference>
<dbReference type="GO" id="GO:0005815">
    <property type="term" value="C:microtubule organizing center"/>
    <property type="evidence" value="ECO:0000318"/>
    <property type="project" value="GO_Central"/>
</dbReference>
<dbReference type="GO" id="GO:0072686">
    <property type="term" value="C:mitotic spindle"/>
    <property type="evidence" value="ECO:0000318"/>
    <property type="project" value="GO_Central"/>
</dbReference>
<dbReference type="GO" id="GO:0005876">
    <property type="term" value="C:spindle microtubule"/>
    <property type="evidence" value="ECO:0000318"/>
    <property type="project" value="GO_Central"/>
</dbReference>
<dbReference type="GO" id="GO:0008017">
    <property type="term" value="F:microtubule binding"/>
    <property type="evidence" value="ECO:0000318"/>
    <property type="project" value="GO_Central"/>
</dbReference>
<dbReference type="GO" id="GO:0030953">
    <property type="term" value="P:astral microtubule organization"/>
    <property type="evidence" value="ECO:0007669"/>
    <property type="project" value="EnsemblMetazoa"/>
</dbReference>
<dbReference type="GO" id="GO:0040001">
    <property type="term" value="P:establishment of mitotic spindle localization"/>
    <property type="evidence" value="ECO:0000318"/>
    <property type="project" value="GO_Central"/>
</dbReference>
<dbReference type="GO" id="GO:0090307">
    <property type="term" value="P:mitotic spindle assembly"/>
    <property type="evidence" value="ECO:0000318"/>
    <property type="project" value="GO_Central"/>
</dbReference>
<dbReference type="GO" id="GO:0031117">
    <property type="term" value="P:positive regulation of microtubule depolymerization"/>
    <property type="evidence" value="ECO:0007669"/>
    <property type="project" value="EnsemblMetazoa"/>
</dbReference>
<dbReference type="GO" id="GO:0051231">
    <property type="term" value="P:spindle elongation"/>
    <property type="evidence" value="ECO:0007669"/>
    <property type="project" value="EnsemblMetazoa"/>
</dbReference>
<dbReference type="Gene3D" id="1.25.10.10">
    <property type="entry name" value="Leucine-rich Repeat Variant"/>
    <property type="match status" value="4"/>
</dbReference>
<dbReference type="InterPro" id="IPR011989">
    <property type="entry name" value="ARM-like"/>
</dbReference>
<dbReference type="InterPro" id="IPR016024">
    <property type="entry name" value="ARM-type_fold"/>
</dbReference>
<dbReference type="InterPro" id="IPR024395">
    <property type="entry name" value="CLASP_N_dom"/>
</dbReference>
<dbReference type="InterPro" id="IPR000357">
    <property type="entry name" value="HEAT"/>
</dbReference>
<dbReference type="InterPro" id="IPR021133">
    <property type="entry name" value="HEAT_type_2"/>
</dbReference>
<dbReference type="InterPro" id="IPR034085">
    <property type="entry name" value="TOG"/>
</dbReference>
<dbReference type="PANTHER" id="PTHR21567">
    <property type="entry name" value="CLASP"/>
    <property type="match status" value="1"/>
</dbReference>
<dbReference type="PANTHER" id="PTHR21567:SF56">
    <property type="entry name" value="PROTEIN CLASP-1"/>
    <property type="match status" value="1"/>
</dbReference>
<dbReference type="Pfam" id="PF12348">
    <property type="entry name" value="CLASP_N"/>
    <property type="match status" value="1"/>
</dbReference>
<dbReference type="Pfam" id="PF02985">
    <property type="entry name" value="HEAT"/>
    <property type="match status" value="1"/>
</dbReference>
<dbReference type="SMART" id="SM01349">
    <property type="entry name" value="TOG"/>
    <property type="match status" value="3"/>
</dbReference>
<dbReference type="SUPFAM" id="SSF48371">
    <property type="entry name" value="ARM repeat"/>
    <property type="match status" value="1"/>
</dbReference>
<dbReference type="PROSITE" id="PS50077">
    <property type="entry name" value="HEAT_REPEAT"/>
    <property type="match status" value="1"/>
</dbReference>
<gene>
    <name evidence="5" type="primary">cls-1</name>
    <name evidence="5" type="ORF">CBG09173</name>
</gene>
<proteinExistence type="inferred from homology"/>
<name>CLAP1_CAEBR</name>
<organism>
    <name type="scientific">Caenorhabditis briggsae</name>
    <dbReference type="NCBI Taxonomy" id="6238"/>
    <lineage>
        <taxon>Eukaryota</taxon>
        <taxon>Metazoa</taxon>
        <taxon>Ecdysozoa</taxon>
        <taxon>Nematoda</taxon>
        <taxon>Chromadorea</taxon>
        <taxon>Rhabditida</taxon>
        <taxon>Rhabditina</taxon>
        <taxon>Rhabditomorpha</taxon>
        <taxon>Rhabditoidea</taxon>
        <taxon>Rhabditidae</taxon>
        <taxon>Peloderinae</taxon>
        <taxon>Caenorhabditis</taxon>
    </lineage>
</organism>
<feature type="chain" id="PRO_0000272277" description="Protein CLASP-1">
    <location>
        <begin position="1"/>
        <end position="1333"/>
    </location>
</feature>
<feature type="repeat" description="HEAT 1">
    <location>
        <begin position="168"/>
        <end position="206"/>
    </location>
</feature>
<feature type="repeat" description="HEAT 2">
    <location>
        <begin position="1266"/>
        <end position="1304"/>
    </location>
</feature>
<feature type="region of interest" description="Disordered" evidence="3">
    <location>
        <begin position="269"/>
        <end position="311"/>
    </location>
</feature>
<feature type="region of interest" description="Disordered" evidence="3">
    <location>
        <begin position="579"/>
        <end position="711"/>
    </location>
</feature>
<feature type="region of interest" description="Disordered" evidence="3">
    <location>
        <begin position="764"/>
        <end position="792"/>
    </location>
</feature>
<feature type="coiled-coil region" evidence="2">
    <location>
        <begin position="360"/>
        <end position="389"/>
    </location>
</feature>
<feature type="compositionally biased region" description="Low complexity" evidence="3">
    <location>
        <begin position="269"/>
        <end position="305"/>
    </location>
</feature>
<feature type="compositionally biased region" description="Low complexity" evidence="3">
    <location>
        <begin position="601"/>
        <end position="611"/>
    </location>
</feature>
<feature type="compositionally biased region" description="Polar residues" evidence="3">
    <location>
        <begin position="612"/>
        <end position="644"/>
    </location>
</feature>
<feature type="compositionally biased region" description="Low complexity" evidence="3">
    <location>
        <begin position="657"/>
        <end position="669"/>
    </location>
</feature>
<feature type="compositionally biased region" description="Low complexity" evidence="3">
    <location>
        <begin position="686"/>
        <end position="707"/>
    </location>
</feature>
<sequence>MDTNWLYVLLQKSTADPLERLKLGNVILNEISQRKVSPHPKLVNDFLDVMSGWLTGSNFKVTIIGLEILDAALRTSPEVLASYYFDRLSVLIERMGDAKVQVREMAINLCRQLAYLENSSPVMLLDRLCVHGTGFEHKQWLVKVGSLNILRDFLSDSFALVIPQAINLIPQLCRLTNDPNSEVRDASTNCLVDLMVFGGKSIIAKIANTRILNEQKMATLLQRYESTIATRGDLPPKHSIPIETSSIPRNNLLRRSLRSPAKIIHPSASTTSFTSSARLSTPPRTNAPSLSPSPSTPSPLSLPAANGRSRDLARSSLRAPAGMSLSRYRSSSCAPAAQCAITLDDFKKAFNAVPKISIYSNSDVREKLETANSVLRNANEDWSKRANQLKLIRSVILNSDDSIDQRLLLSLINELADALEFSIRDLRSQIVREAAITCSFLFEHFGMDVRNVAECVLPAALAQVAVSTKIMASSAATLTVFIVQKIQTRQIFQTLFDLSTSKSKEQRRQLANLLETLISSWDLKVKQPILKSISQLVQNAICDADGETRVAGRKAFAKLEQLHGAAADQIFRELDPAKQKMLRDGVSSSSSSLNSDRDNNNQKQPQQPQQNISQKFLSQRSASALDNKSQVLSIAKPQQSNPSRPTAMPVNNRLPKSSTSSSFSAVRSSGYGQSRAKTPSDGFGGTNFNNNNNNNNKSSSSSPSTSTHQTPIQRVASNLGSSSFVASLTQEQASSLQNAMDLAKDEMSKNNEDDEFLLAEVRKTPPKETSPPASLYARGYGNGSNGSNNSSNNSIQSVEHILKACTSSSINEKRDAIISLSQKLLDRNLDSLECKNIGDTLSRLLAEGNTTLIISILETISIFVKCHYKKLDGWLKLALGKLFAKMGADSLPNVKSALSSTQKMFLTTFDPSTQLKEVCDFMCDPVHLLAPKSRLALLEYICLLFEEIWPEDPRCLERQTQLDTPYTRAAVRKMFAWMFDPRIGAILMPACERLVCALFALNAADFTMIFGDLPPECRDWAYRILQLNGQQQSAQRQQIMEKEAITMTNNNYKPCPPEVEKFEKVSVKASFSTYEATRVPEPQDYRKPTVHLAKNHVEQAAYIRNQMDLMRDFQKPDRVNEAMANLHGMMCEGSFTLWNQFFDELLDEIYQILSTLSQSIRKKLAMRILQKMCTAQATKLFDSTEIAISKVLQCACTSEDNTMSVAAEDCLRILATHLPLPRIVQISRRILSQDDDDQRGVLILKMLTRMFQDIDVDELHMIVDDVAPCFVSAYDSTSSSVRKCAVFGLVALVQRVGMPRLETHLRKLNATKLNLIDLYVGRAKSSESGTSSN</sequence>
<accession>Q61KX5</accession>
<accession>A8X885</accession>
<protein>
    <recommendedName>
        <fullName>Protein CLASP-1</fullName>
    </recommendedName>
</protein>